<sequence>MKGETPVNSTMSIGQARKMVEQLKIEASLCRIKVSKAAADLMTYCDAHACEDPLITPVPTSENPFREKKFFCALL</sequence>
<name>GBG3_BOVIN</name>
<protein>
    <recommendedName>
        <fullName>Guanine nucleotide-binding protein G(I)/G(S)/G(O) subunit gamma-3</fullName>
    </recommendedName>
</protein>
<comment type="function">
    <text>Guanine nucleotide-binding proteins (G proteins) are involved as a modulator or transducer in various transmembrane signaling systems. The beta and gamma chains are required for the GTPase activity, for replacement of GDP by GTP, and for G protein-effector interaction.</text>
</comment>
<comment type="subunit">
    <text evidence="2">G proteins are composed of 3 units, alpha, beta and gamma. Forms a complex with GNAO1 and GNB1. Interacts with SCN8A.</text>
</comment>
<comment type="subcellular location">
    <subcellularLocation>
        <location evidence="5">Cell membrane</location>
        <topology evidence="5">Lipid-anchor</topology>
        <orientation evidence="5">Cytoplasmic side</orientation>
    </subcellularLocation>
</comment>
<comment type="tissue specificity">
    <text evidence="4">Abundantly expressed in brain. Low levels in testis.</text>
</comment>
<comment type="similarity">
    <text evidence="5">Belongs to the G protein gamma family.</text>
</comment>
<gene>
    <name type="primary">GNG3</name>
    <name type="synonym">GNGT3</name>
</gene>
<dbReference type="EMBL" id="M58349">
    <property type="protein sequence ID" value="AAA30539.1"/>
    <property type="molecule type" value="mRNA"/>
</dbReference>
<dbReference type="EMBL" id="BC109874">
    <property type="protein sequence ID" value="AAI09875.1"/>
    <property type="molecule type" value="mRNA"/>
</dbReference>
<dbReference type="PIR" id="A36204">
    <property type="entry name" value="RGBOG3"/>
</dbReference>
<dbReference type="RefSeq" id="NP_776498.1">
    <property type="nucleotide sequence ID" value="NM_174073.2"/>
</dbReference>
<dbReference type="SMR" id="P63214"/>
<dbReference type="DIP" id="DIP-587N"/>
<dbReference type="FunCoup" id="P63214">
    <property type="interactions" value="1497"/>
</dbReference>
<dbReference type="STRING" id="9913.ENSBTAP00000003257"/>
<dbReference type="PaxDb" id="9913-ENSBTAP00000003257"/>
<dbReference type="Ensembl" id="ENSBTAT00000003257.3">
    <property type="protein sequence ID" value="ENSBTAP00000003257.2"/>
    <property type="gene ID" value="ENSBTAG00000002508.3"/>
</dbReference>
<dbReference type="GeneID" id="281204"/>
<dbReference type="KEGG" id="bta:281204"/>
<dbReference type="CTD" id="2785"/>
<dbReference type="VEuPathDB" id="HostDB:ENSBTAG00000002508"/>
<dbReference type="VGNC" id="VGNC:29466">
    <property type="gene designation" value="GNG3"/>
</dbReference>
<dbReference type="eggNOG" id="KOG4119">
    <property type="taxonomic scope" value="Eukaryota"/>
</dbReference>
<dbReference type="GeneTree" id="ENSGT01100000263497"/>
<dbReference type="HOGENOM" id="CLU_168377_0_1_1"/>
<dbReference type="InParanoid" id="P63214"/>
<dbReference type="OMA" id="YCDAHTC"/>
<dbReference type="OrthoDB" id="6264244at2759"/>
<dbReference type="TreeFam" id="TF319909"/>
<dbReference type="Reactome" id="R-BTA-1296041">
    <property type="pathway name" value="Activation of G protein gated Potassium channels"/>
</dbReference>
<dbReference type="Reactome" id="R-BTA-202040">
    <property type="pathway name" value="G-protein activation"/>
</dbReference>
<dbReference type="Reactome" id="R-BTA-381676">
    <property type="pathway name" value="Glucagon-like Peptide-1 (GLP1) regulates insulin secretion"/>
</dbReference>
<dbReference type="Reactome" id="R-BTA-392170">
    <property type="pathway name" value="ADP signalling through P2Y purinoceptor 12"/>
</dbReference>
<dbReference type="Reactome" id="R-BTA-392451">
    <property type="pathway name" value="G beta:gamma signalling through PI3Kgamma"/>
</dbReference>
<dbReference type="Reactome" id="R-BTA-392851">
    <property type="pathway name" value="Prostacyclin signalling through prostacyclin receptor"/>
</dbReference>
<dbReference type="Reactome" id="R-BTA-400042">
    <property type="pathway name" value="Adrenaline,noradrenaline inhibits insulin secretion"/>
</dbReference>
<dbReference type="Reactome" id="R-BTA-4086398">
    <property type="pathway name" value="Ca2+ pathway"/>
</dbReference>
<dbReference type="Reactome" id="R-BTA-416476">
    <property type="pathway name" value="G alpha (q) signalling events"/>
</dbReference>
<dbReference type="Reactome" id="R-BTA-416482">
    <property type="pathway name" value="G alpha (12/13) signalling events"/>
</dbReference>
<dbReference type="Reactome" id="R-BTA-418217">
    <property type="pathway name" value="G beta:gamma signalling through PLC beta"/>
</dbReference>
<dbReference type="Reactome" id="R-BTA-418555">
    <property type="pathway name" value="G alpha (s) signalling events"/>
</dbReference>
<dbReference type="Reactome" id="R-BTA-418592">
    <property type="pathway name" value="ADP signalling through P2Y purinoceptor 1"/>
</dbReference>
<dbReference type="Reactome" id="R-BTA-418594">
    <property type="pathway name" value="G alpha (i) signalling events"/>
</dbReference>
<dbReference type="Reactome" id="R-BTA-418597">
    <property type="pathway name" value="G alpha (z) signalling events"/>
</dbReference>
<dbReference type="Reactome" id="R-BTA-420092">
    <property type="pathway name" value="Glucagon-type ligand receptors"/>
</dbReference>
<dbReference type="Reactome" id="R-BTA-428930">
    <property type="pathway name" value="Thromboxane signalling through TP receptor"/>
</dbReference>
<dbReference type="Reactome" id="R-BTA-432040">
    <property type="pathway name" value="Vasopressin regulates renal water homeostasis via Aquaporins"/>
</dbReference>
<dbReference type="Reactome" id="R-BTA-456926">
    <property type="pathway name" value="Thrombin signalling through proteinase activated receptors (PARs)"/>
</dbReference>
<dbReference type="Reactome" id="R-BTA-500657">
    <property type="pathway name" value="Presynaptic function of Kainate receptors"/>
</dbReference>
<dbReference type="Reactome" id="R-BTA-6814122">
    <property type="pathway name" value="Cooperation of PDCL (PhLP1) and TRiC/CCT in G-protein beta folding"/>
</dbReference>
<dbReference type="Reactome" id="R-BTA-8964315">
    <property type="pathway name" value="G beta:gamma signalling through BTK"/>
</dbReference>
<dbReference type="Reactome" id="R-BTA-8964616">
    <property type="pathway name" value="G beta:gamma signalling through CDC42"/>
</dbReference>
<dbReference type="Reactome" id="R-BTA-9009391">
    <property type="pathway name" value="Extra-nuclear estrogen signaling"/>
</dbReference>
<dbReference type="Reactome" id="R-BTA-9856530">
    <property type="pathway name" value="High laminar flow shear stress activates signaling by PIEZO1 and PECAM1:CDH5:KDR in endothelial cells"/>
</dbReference>
<dbReference type="Reactome" id="R-BTA-997272">
    <property type="pathway name" value="Inhibition of voltage gated Ca2+ channels via Gbeta/gamma subunits"/>
</dbReference>
<dbReference type="Proteomes" id="UP000009136">
    <property type="component" value="Chromosome 29"/>
</dbReference>
<dbReference type="Bgee" id="ENSBTAG00000002508">
    <property type="expression patterns" value="Expressed in Ammon's horn and 104 other cell types or tissues"/>
</dbReference>
<dbReference type="GO" id="GO:0044297">
    <property type="term" value="C:cell body"/>
    <property type="evidence" value="ECO:0007669"/>
    <property type="project" value="Ensembl"/>
</dbReference>
<dbReference type="GO" id="GO:0030425">
    <property type="term" value="C:dendrite"/>
    <property type="evidence" value="ECO:0007669"/>
    <property type="project" value="Ensembl"/>
</dbReference>
<dbReference type="GO" id="GO:0005834">
    <property type="term" value="C:heterotrimeric G-protein complex"/>
    <property type="evidence" value="ECO:0000318"/>
    <property type="project" value="GO_Central"/>
</dbReference>
<dbReference type="GO" id="GO:0005886">
    <property type="term" value="C:plasma membrane"/>
    <property type="evidence" value="ECO:0000304"/>
    <property type="project" value="Reactome"/>
</dbReference>
<dbReference type="GO" id="GO:0014069">
    <property type="term" value="C:postsynaptic density"/>
    <property type="evidence" value="ECO:0007669"/>
    <property type="project" value="Ensembl"/>
</dbReference>
<dbReference type="GO" id="GO:0031681">
    <property type="term" value="F:G-protein beta-subunit binding"/>
    <property type="evidence" value="ECO:0000318"/>
    <property type="project" value="GO_Central"/>
</dbReference>
<dbReference type="GO" id="GO:0007186">
    <property type="term" value="P:G protein-coupled receptor signaling pathway"/>
    <property type="evidence" value="ECO:0000318"/>
    <property type="project" value="GO_Central"/>
</dbReference>
<dbReference type="CDD" id="cd00068">
    <property type="entry name" value="GGL"/>
    <property type="match status" value="1"/>
</dbReference>
<dbReference type="FunFam" id="4.10.260.10:FF:000001">
    <property type="entry name" value="Guanine nucleotide-binding protein subunit gamma"/>
    <property type="match status" value="1"/>
</dbReference>
<dbReference type="Gene3D" id="4.10.260.10">
    <property type="entry name" value="Transducin (heterotrimeric G protein), gamma chain"/>
    <property type="match status" value="1"/>
</dbReference>
<dbReference type="InterPro" id="IPR015898">
    <property type="entry name" value="G-protein_gamma-like_dom"/>
</dbReference>
<dbReference type="InterPro" id="IPR036284">
    <property type="entry name" value="GGL_sf"/>
</dbReference>
<dbReference type="InterPro" id="IPR001770">
    <property type="entry name" value="Gprotein-gamma"/>
</dbReference>
<dbReference type="PANTHER" id="PTHR13809">
    <property type="entry name" value="GUANINE NUCLEOTIDE-BINDING PROTEIN GAMMA SUBUNIT"/>
    <property type="match status" value="1"/>
</dbReference>
<dbReference type="Pfam" id="PF00631">
    <property type="entry name" value="G-gamma"/>
    <property type="match status" value="1"/>
</dbReference>
<dbReference type="PRINTS" id="PR00321">
    <property type="entry name" value="GPROTEING"/>
</dbReference>
<dbReference type="SMART" id="SM01224">
    <property type="entry name" value="G_gamma"/>
    <property type="match status" value="1"/>
</dbReference>
<dbReference type="SMART" id="SM00224">
    <property type="entry name" value="GGL"/>
    <property type="match status" value="1"/>
</dbReference>
<dbReference type="SUPFAM" id="SSF48670">
    <property type="entry name" value="Transducin (heterotrimeric G protein), gamma chain"/>
    <property type="match status" value="1"/>
</dbReference>
<dbReference type="PROSITE" id="PS50058">
    <property type="entry name" value="G_PROTEIN_GAMMA"/>
    <property type="match status" value="1"/>
</dbReference>
<keyword id="KW-1003">Cell membrane</keyword>
<keyword id="KW-0903">Direct protein sequencing</keyword>
<keyword id="KW-0449">Lipoprotein</keyword>
<keyword id="KW-0472">Membrane</keyword>
<keyword id="KW-0488">Methylation</keyword>
<keyword id="KW-0597">Phosphoprotein</keyword>
<keyword id="KW-0636">Prenylation</keyword>
<keyword id="KW-1185">Reference proteome</keyword>
<keyword id="KW-0807">Transducer</keyword>
<feature type="chain" id="PRO_0000012615" description="Guanine nucleotide-binding protein G(I)/G(S)/G(O) subunit gamma-3">
    <location>
        <begin position="1"/>
        <end position="72"/>
    </location>
</feature>
<feature type="propeptide" id="PRO_0000012616" description="Removed in mature form" evidence="1">
    <location>
        <begin position="73"/>
        <end position="75"/>
    </location>
</feature>
<feature type="modified residue" description="Phosphothreonine" evidence="3">
    <location>
        <position position="5"/>
    </location>
</feature>
<feature type="modified residue" description="Phosphoserine" evidence="3">
    <location>
        <position position="9"/>
    </location>
</feature>
<feature type="modified residue" description="Phosphothreonine" evidence="3">
    <location>
        <position position="10"/>
    </location>
</feature>
<feature type="modified residue" description="Phosphoserine" evidence="3">
    <location>
        <position position="12"/>
    </location>
</feature>
<feature type="modified residue" description="Cysteine methyl ester" evidence="1">
    <location>
        <position position="72"/>
    </location>
</feature>
<feature type="lipid moiety-binding region" description="S-geranylgeranyl cysteine" evidence="1">
    <location>
        <position position="72"/>
    </location>
</feature>
<accession>P63214</accession>
<accession>P29798</accession>
<accession>Q32KX4</accession>
<accession>Q61014</accession>
<proteinExistence type="evidence at protein level"/>
<reference key="1">
    <citation type="journal article" date="1990" name="Proc. Natl. Acad. Sci. U.S.A.">
        <title>G protein diversity is increased by associations with a variety of gamma subunits.</title>
        <authorList>
            <person name="Gautam N."/>
            <person name="Northup J."/>
            <person name="Tamir H."/>
            <person name="Simon M.I."/>
        </authorList>
    </citation>
    <scope>NUCLEOTIDE SEQUENCE [MRNA]</scope>
    <scope>TISSUE SPECIFICITY</scope>
    <source>
        <tissue>Brain</tissue>
    </source>
</reference>
<reference key="2">
    <citation type="submission" date="2005-11" db="EMBL/GenBank/DDBJ databases">
        <authorList>
            <consortium name="NIH - Mammalian Gene Collection (MGC) project"/>
        </authorList>
    </citation>
    <scope>NUCLEOTIDE SEQUENCE [LARGE SCALE MRNA]</scope>
    <source>
        <strain>Crossbred X Angus</strain>
        <tissue>Liver</tissue>
    </source>
</reference>
<reference key="3">
    <citation type="journal article" date="1994" name="FEBS Lett.">
        <title>A brain-specific gamma subunit of G protein freed from the corresponding beta subunit under non-denaturing conditions.</title>
        <authorList>
            <person name="Morishita R."/>
            <person name="Kato K."/>
            <person name="Asano T."/>
        </authorList>
    </citation>
    <scope>PROTEIN SEQUENCE OF 1-19</scope>
    <source>
        <tissue>Brain</tissue>
    </source>
</reference>
<organism>
    <name type="scientific">Bos taurus</name>
    <name type="common">Bovine</name>
    <dbReference type="NCBI Taxonomy" id="9913"/>
    <lineage>
        <taxon>Eukaryota</taxon>
        <taxon>Metazoa</taxon>
        <taxon>Chordata</taxon>
        <taxon>Craniata</taxon>
        <taxon>Vertebrata</taxon>
        <taxon>Euteleostomi</taxon>
        <taxon>Mammalia</taxon>
        <taxon>Eutheria</taxon>
        <taxon>Laurasiatheria</taxon>
        <taxon>Artiodactyla</taxon>
        <taxon>Ruminantia</taxon>
        <taxon>Pecora</taxon>
        <taxon>Bovidae</taxon>
        <taxon>Bovinae</taxon>
        <taxon>Bos</taxon>
    </lineage>
</organism>
<evidence type="ECO:0000250" key="1"/>
<evidence type="ECO:0000250" key="2">
    <source>
        <dbReference type="UniProtKB" id="P63215"/>
    </source>
</evidence>
<evidence type="ECO:0000250" key="3">
    <source>
        <dbReference type="UniProtKB" id="P63216"/>
    </source>
</evidence>
<evidence type="ECO:0000269" key="4">
    <source>
    </source>
</evidence>
<evidence type="ECO:0000305" key="5"/>